<proteinExistence type="inferred from homology"/>
<accession>A6LLP5</accession>
<keyword id="KW-0963">Cytoplasm</keyword>
<keyword id="KW-0238">DNA-binding</keyword>
<keyword id="KW-0804">Transcription</keyword>
<keyword id="KW-0805">Transcription regulation</keyword>
<name>Y985_THEM4</name>
<sequence>MSGHNKWANIKHRKAAQDAKRSKIFTKLIREIIVAAREGGGDPETNPRLRAVIERARAANMPKDTIEKSIKKGTGELEGVDYQEIIYEAYAPAGVALYIYAMTDNKNRTAQELRHLLSKHGGSLAESGSVAWLFERKGIIEIPKDKVADFEEFAMVAIDAGAEDIIEDDPIQVVTAPEKLTEVKDNLASNGFEGEAKVTFIPKNTVKVTGADAEKVLKLISVLEDNDDVQEVYANFDIDDKEMEEIMAKLEG</sequence>
<protein>
    <recommendedName>
        <fullName evidence="1">Probable transcriptional regulatory protein Tmel_0985</fullName>
    </recommendedName>
</protein>
<dbReference type="EMBL" id="CP000716">
    <property type="protein sequence ID" value="ABR30846.1"/>
    <property type="molecule type" value="Genomic_DNA"/>
</dbReference>
<dbReference type="RefSeq" id="WP_012057206.1">
    <property type="nucleotide sequence ID" value="NC_009616.1"/>
</dbReference>
<dbReference type="SMR" id="A6LLP5"/>
<dbReference type="STRING" id="391009.Tmel_0985"/>
<dbReference type="KEGG" id="tme:Tmel_0985"/>
<dbReference type="eggNOG" id="COG0217">
    <property type="taxonomic scope" value="Bacteria"/>
</dbReference>
<dbReference type="HOGENOM" id="CLU_062974_2_2_0"/>
<dbReference type="OrthoDB" id="9781053at2"/>
<dbReference type="Proteomes" id="UP000001110">
    <property type="component" value="Chromosome"/>
</dbReference>
<dbReference type="GO" id="GO:0005829">
    <property type="term" value="C:cytosol"/>
    <property type="evidence" value="ECO:0007669"/>
    <property type="project" value="TreeGrafter"/>
</dbReference>
<dbReference type="GO" id="GO:0003677">
    <property type="term" value="F:DNA binding"/>
    <property type="evidence" value="ECO:0007669"/>
    <property type="project" value="UniProtKB-UniRule"/>
</dbReference>
<dbReference type="GO" id="GO:0006355">
    <property type="term" value="P:regulation of DNA-templated transcription"/>
    <property type="evidence" value="ECO:0007669"/>
    <property type="project" value="UniProtKB-UniRule"/>
</dbReference>
<dbReference type="FunFam" id="1.10.10.200:FF:000001">
    <property type="entry name" value="Probable transcriptional regulatory protein YebC"/>
    <property type="match status" value="1"/>
</dbReference>
<dbReference type="Gene3D" id="1.10.10.200">
    <property type="match status" value="1"/>
</dbReference>
<dbReference type="Gene3D" id="3.30.70.980">
    <property type="match status" value="2"/>
</dbReference>
<dbReference type="HAMAP" id="MF_00693">
    <property type="entry name" value="Transcrip_reg_TACO1"/>
    <property type="match status" value="1"/>
</dbReference>
<dbReference type="InterPro" id="IPR017856">
    <property type="entry name" value="Integrase-like_N"/>
</dbReference>
<dbReference type="InterPro" id="IPR048300">
    <property type="entry name" value="TACO1_YebC-like_2nd/3rd_dom"/>
</dbReference>
<dbReference type="InterPro" id="IPR049083">
    <property type="entry name" value="TACO1_YebC_N"/>
</dbReference>
<dbReference type="InterPro" id="IPR002876">
    <property type="entry name" value="Transcrip_reg_TACO1-like"/>
</dbReference>
<dbReference type="InterPro" id="IPR026564">
    <property type="entry name" value="Transcrip_reg_TACO1-like_dom3"/>
</dbReference>
<dbReference type="InterPro" id="IPR029072">
    <property type="entry name" value="YebC-like"/>
</dbReference>
<dbReference type="NCBIfam" id="NF001030">
    <property type="entry name" value="PRK00110.1"/>
    <property type="match status" value="1"/>
</dbReference>
<dbReference type="NCBIfam" id="NF009044">
    <property type="entry name" value="PRK12378.1"/>
    <property type="match status" value="1"/>
</dbReference>
<dbReference type="NCBIfam" id="TIGR01033">
    <property type="entry name" value="YebC/PmpR family DNA-binding transcriptional regulator"/>
    <property type="match status" value="1"/>
</dbReference>
<dbReference type="PANTHER" id="PTHR12532:SF6">
    <property type="entry name" value="TRANSCRIPTIONAL REGULATORY PROTEIN YEBC-RELATED"/>
    <property type="match status" value="1"/>
</dbReference>
<dbReference type="PANTHER" id="PTHR12532">
    <property type="entry name" value="TRANSLATIONAL ACTIVATOR OF CYTOCHROME C OXIDASE 1"/>
    <property type="match status" value="1"/>
</dbReference>
<dbReference type="Pfam" id="PF20772">
    <property type="entry name" value="TACO1_YebC_N"/>
    <property type="match status" value="1"/>
</dbReference>
<dbReference type="Pfam" id="PF01709">
    <property type="entry name" value="Transcrip_reg"/>
    <property type="match status" value="1"/>
</dbReference>
<dbReference type="SUPFAM" id="SSF75625">
    <property type="entry name" value="YebC-like"/>
    <property type="match status" value="1"/>
</dbReference>
<reference key="1">
    <citation type="submission" date="2007-05" db="EMBL/GenBank/DDBJ databases">
        <title>Complete sequence of Thermosipho melanesiensis BI429.</title>
        <authorList>
            <consortium name="US DOE Joint Genome Institute"/>
            <person name="Copeland A."/>
            <person name="Lucas S."/>
            <person name="Lapidus A."/>
            <person name="Barry K."/>
            <person name="Glavina del Rio T."/>
            <person name="Dalin E."/>
            <person name="Tice H."/>
            <person name="Pitluck S."/>
            <person name="Chertkov O."/>
            <person name="Brettin T."/>
            <person name="Bruce D."/>
            <person name="Detter J.C."/>
            <person name="Han C."/>
            <person name="Schmutz J."/>
            <person name="Larimer F."/>
            <person name="Land M."/>
            <person name="Hauser L."/>
            <person name="Kyrpides N."/>
            <person name="Mikhailova N."/>
            <person name="Nelson K."/>
            <person name="Gogarten J.P."/>
            <person name="Noll K."/>
            <person name="Richardson P."/>
        </authorList>
    </citation>
    <scope>NUCLEOTIDE SEQUENCE [LARGE SCALE GENOMIC DNA]</scope>
    <source>
        <strain>DSM 12029 / CIP 104789 / BI429</strain>
    </source>
</reference>
<organism>
    <name type="scientific">Thermosipho melanesiensis (strain DSM 12029 / CIP 104789 / BI429)</name>
    <dbReference type="NCBI Taxonomy" id="391009"/>
    <lineage>
        <taxon>Bacteria</taxon>
        <taxon>Thermotogati</taxon>
        <taxon>Thermotogota</taxon>
        <taxon>Thermotogae</taxon>
        <taxon>Thermotogales</taxon>
        <taxon>Fervidobacteriaceae</taxon>
        <taxon>Thermosipho</taxon>
    </lineage>
</organism>
<evidence type="ECO:0000255" key="1">
    <source>
        <dbReference type="HAMAP-Rule" id="MF_00693"/>
    </source>
</evidence>
<feature type="chain" id="PRO_1000045387" description="Probable transcriptional regulatory protein Tmel_0985">
    <location>
        <begin position="1"/>
        <end position="252"/>
    </location>
</feature>
<gene>
    <name type="ordered locus">Tmel_0985</name>
</gene>
<comment type="subcellular location">
    <subcellularLocation>
        <location evidence="1">Cytoplasm</location>
    </subcellularLocation>
</comment>
<comment type="similarity">
    <text evidence="1">Belongs to the TACO1 family.</text>
</comment>